<proteinExistence type="inferred from homology"/>
<reference key="1">
    <citation type="submission" date="2007-10" db="EMBL/GenBank/DDBJ databases">
        <title>Complete sequence of Salinispora arenicola CNS-205.</title>
        <authorList>
            <consortium name="US DOE Joint Genome Institute"/>
            <person name="Copeland A."/>
            <person name="Lucas S."/>
            <person name="Lapidus A."/>
            <person name="Barry K."/>
            <person name="Glavina del Rio T."/>
            <person name="Dalin E."/>
            <person name="Tice H."/>
            <person name="Pitluck S."/>
            <person name="Foster B."/>
            <person name="Schmutz J."/>
            <person name="Larimer F."/>
            <person name="Land M."/>
            <person name="Hauser L."/>
            <person name="Kyrpides N."/>
            <person name="Ivanova N."/>
            <person name="Jensen P.R."/>
            <person name="Moore B.S."/>
            <person name="Penn K."/>
            <person name="Jenkins C."/>
            <person name="Udwary D."/>
            <person name="Xiang L."/>
            <person name="Gontang E."/>
            <person name="Richardson P."/>
        </authorList>
    </citation>
    <scope>NUCLEOTIDE SEQUENCE [LARGE SCALE GENOMIC DNA]</scope>
    <source>
        <strain>CNS-205</strain>
    </source>
</reference>
<gene>
    <name evidence="1" type="primary">bioB</name>
    <name type="ordered locus">Sare_1518</name>
</gene>
<protein>
    <recommendedName>
        <fullName evidence="1">Biotin synthase</fullName>
        <ecNumber evidence="1">2.8.1.6</ecNumber>
    </recommendedName>
</protein>
<organism>
    <name type="scientific">Salinispora arenicola (strain CNS-205)</name>
    <dbReference type="NCBI Taxonomy" id="391037"/>
    <lineage>
        <taxon>Bacteria</taxon>
        <taxon>Bacillati</taxon>
        <taxon>Actinomycetota</taxon>
        <taxon>Actinomycetes</taxon>
        <taxon>Micromonosporales</taxon>
        <taxon>Micromonosporaceae</taxon>
        <taxon>Salinispora</taxon>
    </lineage>
</organism>
<keyword id="KW-0001">2Fe-2S</keyword>
<keyword id="KW-0004">4Fe-4S</keyword>
<keyword id="KW-0093">Biotin biosynthesis</keyword>
<keyword id="KW-0408">Iron</keyword>
<keyword id="KW-0411">Iron-sulfur</keyword>
<keyword id="KW-0479">Metal-binding</keyword>
<keyword id="KW-0949">S-adenosyl-L-methionine</keyword>
<keyword id="KW-0808">Transferase</keyword>
<sequence>MPEILDQARTQVLENGVGLDEAGALAVLNLPDEHLPAALQLAHEVRMRWCGPEVEVEGIVSLKTGGCPEDCHFCSQSGLFTSPVRAVWLDIPSLVEAAKQTAKTGATEFCIVAAVRGPDDRLMRQLREGVAAIRAEVDIHVAASVGMLTQEQVDELVEMGVHRYNHNLETCRSYFPNVVTTHSWEERWETLRMVRASGMEVCCGGILGLGETVEQRAEFAAQLAELDPHEVPLNFLNPRPGTPLGDRPVVEGKDALRAIAAFRLAMPRTILRYAGGREITLGDLGTRSGLLGGINAVIVGNYLTTLGRPATTDLELLDDLKMPVKALSATL</sequence>
<comment type="function">
    <text evidence="1">Catalyzes the conversion of dethiobiotin (DTB) to biotin by the insertion of a sulfur atom into dethiobiotin via a radical-based mechanism.</text>
</comment>
<comment type="catalytic activity">
    <reaction evidence="1">
        <text>(4R,5S)-dethiobiotin + (sulfur carrier)-SH + 2 reduced [2Fe-2S]-[ferredoxin] + 2 S-adenosyl-L-methionine = (sulfur carrier)-H + biotin + 2 5'-deoxyadenosine + 2 L-methionine + 2 oxidized [2Fe-2S]-[ferredoxin]</text>
        <dbReference type="Rhea" id="RHEA:22060"/>
        <dbReference type="Rhea" id="RHEA-COMP:10000"/>
        <dbReference type="Rhea" id="RHEA-COMP:10001"/>
        <dbReference type="Rhea" id="RHEA-COMP:14737"/>
        <dbReference type="Rhea" id="RHEA-COMP:14739"/>
        <dbReference type="ChEBI" id="CHEBI:17319"/>
        <dbReference type="ChEBI" id="CHEBI:29917"/>
        <dbReference type="ChEBI" id="CHEBI:33737"/>
        <dbReference type="ChEBI" id="CHEBI:33738"/>
        <dbReference type="ChEBI" id="CHEBI:57586"/>
        <dbReference type="ChEBI" id="CHEBI:57844"/>
        <dbReference type="ChEBI" id="CHEBI:59789"/>
        <dbReference type="ChEBI" id="CHEBI:64428"/>
        <dbReference type="ChEBI" id="CHEBI:149473"/>
        <dbReference type="EC" id="2.8.1.6"/>
    </reaction>
</comment>
<comment type="cofactor">
    <cofactor evidence="1">
        <name>[4Fe-4S] cluster</name>
        <dbReference type="ChEBI" id="CHEBI:49883"/>
    </cofactor>
    <text evidence="1">Binds 1 [4Fe-4S] cluster. The cluster is coordinated with 3 cysteines and an exchangeable S-adenosyl-L-methionine.</text>
</comment>
<comment type="cofactor">
    <cofactor evidence="1">
        <name>[2Fe-2S] cluster</name>
        <dbReference type="ChEBI" id="CHEBI:190135"/>
    </cofactor>
    <text evidence="1">Binds 1 [2Fe-2S] cluster. The cluster is coordinated with 3 cysteines and 1 arginine.</text>
</comment>
<comment type="pathway">
    <text evidence="1">Cofactor biosynthesis; biotin biosynthesis; biotin from 7,8-diaminononanoate: step 2/2.</text>
</comment>
<comment type="subunit">
    <text evidence="1">Homodimer.</text>
</comment>
<comment type="similarity">
    <text evidence="1">Belongs to the radical SAM superfamily. Biotin synthase family.</text>
</comment>
<name>BIOB_SALAI</name>
<feature type="chain" id="PRO_0000381595" description="Biotin synthase">
    <location>
        <begin position="1"/>
        <end position="331"/>
    </location>
</feature>
<feature type="domain" description="Radical SAM core" evidence="2">
    <location>
        <begin position="52"/>
        <end position="277"/>
    </location>
</feature>
<feature type="binding site" evidence="1">
    <location>
        <position position="67"/>
    </location>
    <ligand>
        <name>[4Fe-4S] cluster</name>
        <dbReference type="ChEBI" id="CHEBI:49883"/>
        <note>4Fe-4S-S-AdoMet</note>
    </ligand>
</feature>
<feature type="binding site" evidence="1">
    <location>
        <position position="71"/>
    </location>
    <ligand>
        <name>[4Fe-4S] cluster</name>
        <dbReference type="ChEBI" id="CHEBI:49883"/>
        <note>4Fe-4S-S-AdoMet</note>
    </ligand>
</feature>
<feature type="binding site" evidence="1">
    <location>
        <position position="74"/>
    </location>
    <ligand>
        <name>[4Fe-4S] cluster</name>
        <dbReference type="ChEBI" id="CHEBI:49883"/>
        <note>4Fe-4S-S-AdoMet</note>
    </ligand>
</feature>
<feature type="binding site" evidence="1">
    <location>
        <position position="110"/>
    </location>
    <ligand>
        <name>[2Fe-2S] cluster</name>
        <dbReference type="ChEBI" id="CHEBI:190135"/>
    </ligand>
</feature>
<feature type="binding site" evidence="1">
    <location>
        <position position="202"/>
    </location>
    <ligand>
        <name>[2Fe-2S] cluster</name>
        <dbReference type="ChEBI" id="CHEBI:190135"/>
    </ligand>
</feature>
<feature type="binding site" evidence="1">
    <location>
        <position position="272"/>
    </location>
    <ligand>
        <name>[2Fe-2S] cluster</name>
        <dbReference type="ChEBI" id="CHEBI:190135"/>
    </ligand>
</feature>
<evidence type="ECO:0000255" key="1">
    <source>
        <dbReference type="HAMAP-Rule" id="MF_01694"/>
    </source>
</evidence>
<evidence type="ECO:0000255" key="2">
    <source>
        <dbReference type="PROSITE-ProRule" id="PRU01266"/>
    </source>
</evidence>
<accession>A8LUR1</accession>
<dbReference type="EC" id="2.8.1.6" evidence="1"/>
<dbReference type="EMBL" id="CP000850">
    <property type="protein sequence ID" value="ABV97414.1"/>
    <property type="molecule type" value="Genomic_DNA"/>
</dbReference>
<dbReference type="SMR" id="A8LUR1"/>
<dbReference type="STRING" id="391037.Sare_1518"/>
<dbReference type="KEGG" id="saq:Sare_1518"/>
<dbReference type="PATRIC" id="fig|391037.6.peg.1547"/>
<dbReference type="eggNOG" id="COG0502">
    <property type="taxonomic scope" value="Bacteria"/>
</dbReference>
<dbReference type="HOGENOM" id="CLU_033172_2_1_11"/>
<dbReference type="OrthoDB" id="9786826at2"/>
<dbReference type="UniPathway" id="UPA00078">
    <property type="reaction ID" value="UER00162"/>
</dbReference>
<dbReference type="GO" id="GO:0051537">
    <property type="term" value="F:2 iron, 2 sulfur cluster binding"/>
    <property type="evidence" value="ECO:0007669"/>
    <property type="project" value="UniProtKB-KW"/>
</dbReference>
<dbReference type="GO" id="GO:0051539">
    <property type="term" value="F:4 iron, 4 sulfur cluster binding"/>
    <property type="evidence" value="ECO:0007669"/>
    <property type="project" value="UniProtKB-KW"/>
</dbReference>
<dbReference type="GO" id="GO:0004076">
    <property type="term" value="F:biotin synthase activity"/>
    <property type="evidence" value="ECO:0007669"/>
    <property type="project" value="UniProtKB-UniRule"/>
</dbReference>
<dbReference type="GO" id="GO:0005506">
    <property type="term" value="F:iron ion binding"/>
    <property type="evidence" value="ECO:0007669"/>
    <property type="project" value="UniProtKB-UniRule"/>
</dbReference>
<dbReference type="GO" id="GO:0009102">
    <property type="term" value="P:biotin biosynthetic process"/>
    <property type="evidence" value="ECO:0007669"/>
    <property type="project" value="UniProtKB-UniRule"/>
</dbReference>
<dbReference type="CDD" id="cd01335">
    <property type="entry name" value="Radical_SAM"/>
    <property type="match status" value="1"/>
</dbReference>
<dbReference type="FunFam" id="3.20.20.70:FF:000026">
    <property type="entry name" value="Biotin synthase"/>
    <property type="match status" value="1"/>
</dbReference>
<dbReference type="Gene3D" id="3.20.20.70">
    <property type="entry name" value="Aldolase class I"/>
    <property type="match status" value="1"/>
</dbReference>
<dbReference type="HAMAP" id="MF_01694">
    <property type="entry name" value="BioB"/>
    <property type="match status" value="1"/>
</dbReference>
<dbReference type="InterPro" id="IPR013785">
    <property type="entry name" value="Aldolase_TIM"/>
</dbReference>
<dbReference type="InterPro" id="IPR010722">
    <property type="entry name" value="BATS_dom"/>
</dbReference>
<dbReference type="InterPro" id="IPR002684">
    <property type="entry name" value="Biotin_synth/BioAB"/>
</dbReference>
<dbReference type="InterPro" id="IPR024177">
    <property type="entry name" value="Biotin_synthase"/>
</dbReference>
<dbReference type="InterPro" id="IPR006638">
    <property type="entry name" value="Elp3/MiaA/NifB-like_rSAM"/>
</dbReference>
<dbReference type="InterPro" id="IPR007197">
    <property type="entry name" value="rSAM"/>
</dbReference>
<dbReference type="NCBIfam" id="TIGR00433">
    <property type="entry name" value="bioB"/>
    <property type="match status" value="1"/>
</dbReference>
<dbReference type="PANTHER" id="PTHR22976">
    <property type="entry name" value="BIOTIN SYNTHASE"/>
    <property type="match status" value="1"/>
</dbReference>
<dbReference type="PANTHER" id="PTHR22976:SF2">
    <property type="entry name" value="BIOTIN SYNTHASE, MITOCHONDRIAL"/>
    <property type="match status" value="1"/>
</dbReference>
<dbReference type="Pfam" id="PF06968">
    <property type="entry name" value="BATS"/>
    <property type="match status" value="1"/>
</dbReference>
<dbReference type="Pfam" id="PF04055">
    <property type="entry name" value="Radical_SAM"/>
    <property type="match status" value="1"/>
</dbReference>
<dbReference type="PIRSF" id="PIRSF001619">
    <property type="entry name" value="Biotin_synth"/>
    <property type="match status" value="1"/>
</dbReference>
<dbReference type="SFLD" id="SFLDG01060">
    <property type="entry name" value="BATS_domain_containing"/>
    <property type="match status" value="1"/>
</dbReference>
<dbReference type="SFLD" id="SFLDG01278">
    <property type="entry name" value="biotin_synthase_like"/>
    <property type="match status" value="1"/>
</dbReference>
<dbReference type="SMART" id="SM00876">
    <property type="entry name" value="BATS"/>
    <property type="match status" value="1"/>
</dbReference>
<dbReference type="SMART" id="SM00729">
    <property type="entry name" value="Elp3"/>
    <property type="match status" value="1"/>
</dbReference>
<dbReference type="SUPFAM" id="SSF102114">
    <property type="entry name" value="Radical SAM enzymes"/>
    <property type="match status" value="1"/>
</dbReference>
<dbReference type="PROSITE" id="PS51918">
    <property type="entry name" value="RADICAL_SAM"/>
    <property type="match status" value="1"/>
</dbReference>